<gene>
    <name type="primary">Mapk10</name>
    <name type="synonym">Jnk3</name>
    <name type="synonym">Prkm10</name>
    <name type="synonym">Serk2</name>
</gene>
<comment type="function">
    <text evidence="3 10 11 12 13">Serine/threonine-protein kinase involved in various processes such as neuronal proliferation, differentiation, migration and programmed cell death. Extracellular stimuli such as pro-inflammatory cytokines or physical stress stimulate the stress-activated protein kinase/c-Jun N-terminal kinase (SAP/JNK) signaling pathway. In this cascade, two dual specificity kinases MAP2K4/MKK4 and MAP2K7/MKK7 phosphorylate and activate MAPK10/JNK3. In turn, MAPK10/JNK3 phosphorylates a number of transcription factors, primarily components of AP-1 such as JUN and ATF2 and thus regulates AP-1 transcriptional activity. Plays regulatory roles in the signaling pathways during neuronal apoptosis. Phosphorylates the neuronal microtubule regulator STMN2. Acts in the regulation of the amyloid-beta precursor protein/APP signaling during neuronal differentiation by phosphorylating APP. Also participates in neurite growth in spiral ganglion neurons. Phosphorylates the CLOCK-BMAL1 heterodimer and plays a role in the photic regulation of the circadian clock (PubMed:22441692). Phosphorylates JUND and this phosphorylation is inhibited in the presence of MEN1 (By similarity).</text>
</comment>
<comment type="catalytic activity">
    <reaction>
        <text>L-seryl-[protein] + ATP = O-phospho-L-seryl-[protein] + ADP + H(+)</text>
        <dbReference type="Rhea" id="RHEA:17989"/>
        <dbReference type="Rhea" id="RHEA-COMP:9863"/>
        <dbReference type="Rhea" id="RHEA-COMP:11604"/>
        <dbReference type="ChEBI" id="CHEBI:15378"/>
        <dbReference type="ChEBI" id="CHEBI:29999"/>
        <dbReference type="ChEBI" id="CHEBI:30616"/>
        <dbReference type="ChEBI" id="CHEBI:83421"/>
        <dbReference type="ChEBI" id="CHEBI:456216"/>
        <dbReference type="EC" id="2.7.11.24"/>
    </reaction>
</comment>
<comment type="catalytic activity">
    <reaction>
        <text>L-threonyl-[protein] + ATP = O-phospho-L-threonyl-[protein] + ADP + H(+)</text>
        <dbReference type="Rhea" id="RHEA:46608"/>
        <dbReference type="Rhea" id="RHEA-COMP:11060"/>
        <dbReference type="Rhea" id="RHEA-COMP:11605"/>
        <dbReference type="ChEBI" id="CHEBI:15378"/>
        <dbReference type="ChEBI" id="CHEBI:30013"/>
        <dbReference type="ChEBI" id="CHEBI:30616"/>
        <dbReference type="ChEBI" id="CHEBI:61977"/>
        <dbReference type="ChEBI" id="CHEBI:456216"/>
        <dbReference type="EC" id="2.7.11.24"/>
    </reaction>
</comment>
<comment type="cofactor">
    <cofactor evidence="13">
        <name>Mg(2+)</name>
        <dbReference type="ChEBI" id="CHEBI:18420"/>
    </cofactor>
</comment>
<comment type="activity regulation">
    <text evidence="1 8">Activated by threonine and tyrosine phosphorylation by two dual specificity kinases, MAP2K4 and MAP2K7. MAP2K7 phosphorylates MAPK10 on Thr-221 causing a conformational change and a large increase in Vmax for the enzyme. MAP2K4 then phosphorylates Tyr-223 resulting in a further increase in Vmax. Inhibited by dual specificity phosphatases, such as DUSP1 (By similarity). Inhibited by HDAC9.</text>
</comment>
<comment type="subunit">
    <text evidence="2 3 7 8 9">Interacts with MAPK8IP1/JIP-1, MAPK8IP3/JIP-3/JSAP1 and SPAG9/MAPK8IP4/JIP4 (By similarity). Interacts with HDAC9 and MAPKBP1 (PubMed:10471813, PubMed:16611996). Interacts with ARRB2; the interaction enhances MAPK10 activation by MAP3K5 (By similarity). Interacts with SARM1 (PubMed:17724133). Interacts with JUND; interaction is inhibited in the presence of MEN1 (By similarity).</text>
</comment>
<comment type="interaction">
    <interactant intactId="EBI-400741">
        <id>Q61831</id>
    </interactant>
    <interactant intactId="EBI-9549291">
        <id>Q9ESN9-2</id>
        <label>Mapk8ip3</label>
    </interactant>
    <organismsDiffer>false</organismsDiffer>
    <experiments>4</experiments>
</comment>
<comment type="subcellular location">
    <subcellularLocation>
        <location evidence="9">Cytoplasm</location>
    </subcellularLocation>
    <subcellularLocation>
        <location evidence="9">Membrane</location>
        <topology evidence="9">Lipid-anchor</topology>
    </subcellularLocation>
    <subcellularLocation>
        <location evidence="9">Nucleus</location>
    </subcellularLocation>
    <subcellularLocation>
        <location evidence="9">Mitochondrion</location>
    </subcellularLocation>
    <text evidence="1">Palmitoylation regulates MAPK10 trafficking to cytoskeleton (By similarity). Recruited to the mitochondria in the presence of SARM1.</text>
</comment>
<comment type="alternative products">
    <event type="alternative splicing"/>
    <isoform>
        <id>Q61831-1</id>
        <name>Alpha-2</name>
        <sequence type="displayed"/>
    </isoform>
    <isoform>
        <id>Q61831-2</id>
        <name>Alpha-1</name>
        <sequence type="described" ref="VSP_004840"/>
    </isoform>
</comment>
<comment type="tissue specificity">
    <text evidence="12">Brain (at protein level). Expressed specifically in neurons of the hippocampus, cortex, cerebellum, brainstem, and spinal cord. Seems to be also found in testis, and very weakly in the heart.</text>
</comment>
<comment type="developmental stage">
    <text>Expression begins in day 11.5 dpc embryos, and is localized in both the rostral spinal cord and rhombencephalon. In 12.5-13 dpc embryos, it is found throughout the telencephalon. By day 17.5, JNK3 is also expressed in neurons of dorsal root and sensory ganglia and at lower levels in neurons of the myenteric plexus and the developing heart.</text>
</comment>
<comment type="domain">
    <text>The TXY motif contains the threonine and tyrosine residues whose phosphorylation activates the MAP kinases.</text>
</comment>
<comment type="PTM">
    <text evidence="1">Dually phosphorylated on Thr-221 and Tyr-223 by MAP2K4 and MAP2K7, which activates the enzyme. MAP2K7 shows a strong preference for Thr-221 while MAP2K4 phosphorylates Tyr-223 preferentially. Weakly autophosphorylated on threonine and tyrosine residues in vitro (By similarity).</text>
</comment>
<comment type="PTM">
    <text evidence="1">Palmitoylation regulates subcellular location and axonal development.</text>
</comment>
<comment type="similarity">
    <text evidence="14">Belongs to the protein kinase superfamily. CMGC Ser/Thr protein kinase family. MAP kinase subfamily.</text>
</comment>
<dbReference type="EC" id="2.7.11.24"/>
<dbReference type="EMBL" id="L35236">
    <property type="protein sequence ID" value="AAB37741.1"/>
    <property type="molecule type" value="mRNA"/>
</dbReference>
<dbReference type="EMBL" id="AB005665">
    <property type="protein sequence ID" value="BAA85877.1"/>
    <property type="molecule type" value="mRNA"/>
</dbReference>
<dbReference type="RefSeq" id="NP_001297615.1">
    <property type="nucleotide sequence ID" value="NM_001310686.2"/>
</dbReference>
<dbReference type="RefSeq" id="XP_017176379.1">
    <property type="nucleotide sequence ID" value="XM_017320890.1"/>
</dbReference>
<dbReference type="RefSeq" id="XP_017176380.1">
    <property type="nucleotide sequence ID" value="XM_017320891.1"/>
</dbReference>
<dbReference type="SMR" id="Q61831"/>
<dbReference type="BioGRID" id="204967">
    <property type="interactions" value="14"/>
</dbReference>
<dbReference type="ELM" id="Q61831"/>
<dbReference type="FunCoup" id="Q61831">
    <property type="interactions" value="2505"/>
</dbReference>
<dbReference type="IntAct" id="Q61831">
    <property type="interactions" value="1"/>
</dbReference>
<dbReference type="MINT" id="Q61831"/>
<dbReference type="STRING" id="10090.ENSMUSP00000127193"/>
<dbReference type="ChEMBL" id="CHEMBL2331057"/>
<dbReference type="GlyGen" id="Q61831">
    <property type="glycosylation" value="1 site, 1 N-linked glycan (1 site)"/>
</dbReference>
<dbReference type="iPTMnet" id="Q61831"/>
<dbReference type="PhosphoSitePlus" id="Q61831"/>
<dbReference type="jPOST" id="Q61831"/>
<dbReference type="PaxDb" id="10090-ENSMUSP00000108468"/>
<dbReference type="PeptideAtlas" id="Q61831"/>
<dbReference type="ProteomicsDB" id="291463">
    <molecule id="Q61831-1"/>
</dbReference>
<dbReference type="ProteomicsDB" id="291464">
    <molecule id="Q61831-2"/>
</dbReference>
<dbReference type="DNASU" id="26414"/>
<dbReference type="GeneID" id="26414"/>
<dbReference type="KEGG" id="mmu:26414"/>
<dbReference type="UCSC" id="uc008yjg.1">
    <molecule id="Q61831-1"/>
    <property type="organism name" value="mouse"/>
</dbReference>
<dbReference type="AGR" id="MGI:1346863"/>
<dbReference type="CTD" id="5602"/>
<dbReference type="MGI" id="MGI:1346863">
    <property type="gene designation" value="Mapk10"/>
</dbReference>
<dbReference type="eggNOG" id="KOG0665">
    <property type="taxonomic scope" value="Eukaryota"/>
</dbReference>
<dbReference type="InParanoid" id="Q61831"/>
<dbReference type="PhylomeDB" id="Q61831"/>
<dbReference type="BRENDA" id="2.7.11.24">
    <property type="organism ID" value="3474"/>
</dbReference>
<dbReference type="Reactome" id="R-MMU-2559580">
    <property type="pathway name" value="Oxidative Stress Induced Senescence"/>
</dbReference>
<dbReference type="Reactome" id="R-MMU-2871796">
    <property type="pathway name" value="FCERI mediated MAPK activation"/>
</dbReference>
<dbReference type="Reactome" id="R-MMU-450321">
    <property type="pathway name" value="JNK (c-Jun kinases) phosphorylation and activation mediated by activated human TAK1"/>
</dbReference>
<dbReference type="Reactome" id="R-MMU-450341">
    <property type="pathway name" value="Activation of the AP-1 family of transcription factors"/>
</dbReference>
<dbReference type="BioGRID-ORCS" id="26414">
    <property type="hits" value="1 hit in 80 CRISPR screens"/>
</dbReference>
<dbReference type="ChiTaRS" id="Mapk10">
    <property type="organism name" value="mouse"/>
</dbReference>
<dbReference type="PRO" id="PR:Q61831"/>
<dbReference type="Proteomes" id="UP000000589">
    <property type="component" value="Unplaced"/>
</dbReference>
<dbReference type="RNAct" id="Q61831">
    <property type="molecule type" value="protein"/>
</dbReference>
<dbReference type="GO" id="GO:0005737">
    <property type="term" value="C:cytoplasm"/>
    <property type="evidence" value="ECO:0000314"/>
    <property type="project" value="UniProtKB"/>
</dbReference>
<dbReference type="GO" id="GO:0005739">
    <property type="term" value="C:mitochondrion"/>
    <property type="evidence" value="ECO:0000314"/>
    <property type="project" value="UniProtKB"/>
</dbReference>
<dbReference type="GO" id="GO:0005634">
    <property type="term" value="C:nucleus"/>
    <property type="evidence" value="ECO:0007669"/>
    <property type="project" value="UniProtKB-SubCell"/>
</dbReference>
<dbReference type="GO" id="GO:0005886">
    <property type="term" value="C:plasma membrane"/>
    <property type="evidence" value="ECO:0000314"/>
    <property type="project" value="UniProtKB"/>
</dbReference>
<dbReference type="GO" id="GO:0014069">
    <property type="term" value="C:postsynaptic density"/>
    <property type="evidence" value="ECO:0000314"/>
    <property type="project" value="MGI"/>
</dbReference>
<dbReference type="GO" id="GO:0005524">
    <property type="term" value="F:ATP binding"/>
    <property type="evidence" value="ECO:0007669"/>
    <property type="project" value="UniProtKB-KW"/>
</dbReference>
<dbReference type="GO" id="GO:0004705">
    <property type="term" value="F:JUN kinase activity"/>
    <property type="evidence" value="ECO:0000314"/>
    <property type="project" value="UniProtKB"/>
</dbReference>
<dbReference type="GO" id="GO:0106310">
    <property type="term" value="F:protein serine kinase activity"/>
    <property type="evidence" value="ECO:0007669"/>
    <property type="project" value="RHEA"/>
</dbReference>
<dbReference type="GO" id="GO:0007254">
    <property type="term" value="P:JNK cascade"/>
    <property type="evidence" value="ECO:0000314"/>
    <property type="project" value="UniProtKB"/>
</dbReference>
<dbReference type="GO" id="GO:0045475">
    <property type="term" value="P:locomotor rhythm"/>
    <property type="evidence" value="ECO:0000315"/>
    <property type="project" value="UniProtKB"/>
</dbReference>
<dbReference type="GO" id="GO:0006468">
    <property type="term" value="P:protein phosphorylation"/>
    <property type="evidence" value="ECO:0000315"/>
    <property type="project" value="UniProtKB"/>
</dbReference>
<dbReference type="GO" id="GO:0042752">
    <property type="term" value="P:regulation of circadian rhythm"/>
    <property type="evidence" value="ECO:0000315"/>
    <property type="project" value="UniProtKB"/>
</dbReference>
<dbReference type="GO" id="GO:0009416">
    <property type="term" value="P:response to light stimulus"/>
    <property type="evidence" value="ECO:0000315"/>
    <property type="project" value="UniProtKB"/>
</dbReference>
<dbReference type="CDD" id="cd07850">
    <property type="entry name" value="STKc_JNK"/>
    <property type="match status" value="1"/>
</dbReference>
<dbReference type="FunFam" id="1.10.510.10:FF:000009">
    <property type="entry name" value="Mitogen-activated protein kinase"/>
    <property type="match status" value="1"/>
</dbReference>
<dbReference type="FunFam" id="3.30.200.20:FF:000210">
    <property type="entry name" value="Mitogen-activated protein kinase"/>
    <property type="match status" value="1"/>
</dbReference>
<dbReference type="Gene3D" id="3.30.200.20">
    <property type="entry name" value="Phosphorylase Kinase, domain 1"/>
    <property type="match status" value="1"/>
</dbReference>
<dbReference type="Gene3D" id="1.10.510.10">
    <property type="entry name" value="Transferase(Phosphotransferase) domain 1"/>
    <property type="match status" value="1"/>
</dbReference>
<dbReference type="InterPro" id="IPR011009">
    <property type="entry name" value="Kinase-like_dom_sf"/>
</dbReference>
<dbReference type="InterPro" id="IPR050117">
    <property type="entry name" value="MAP_kinase"/>
</dbReference>
<dbReference type="InterPro" id="IPR003527">
    <property type="entry name" value="MAP_kinase_CS"/>
</dbReference>
<dbReference type="InterPro" id="IPR008351">
    <property type="entry name" value="MAPK_JNK"/>
</dbReference>
<dbReference type="InterPro" id="IPR000719">
    <property type="entry name" value="Prot_kinase_dom"/>
</dbReference>
<dbReference type="InterPro" id="IPR008271">
    <property type="entry name" value="Ser/Thr_kinase_AS"/>
</dbReference>
<dbReference type="PANTHER" id="PTHR24055">
    <property type="entry name" value="MITOGEN-ACTIVATED PROTEIN KINASE"/>
    <property type="match status" value="1"/>
</dbReference>
<dbReference type="Pfam" id="PF00069">
    <property type="entry name" value="Pkinase"/>
    <property type="match status" value="1"/>
</dbReference>
<dbReference type="PRINTS" id="PR01772">
    <property type="entry name" value="JNKMAPKINASE"/>
</dbReference>
<dbReference type="SMART" id="SM00220">
    <property type="entry name" value="S_TKc"/>
    <property type="match status" value="1"/>
</dbReference>
<dbReference type="SUPFAM" id="SSF56112">
    <property type="entry name" value="Protein kinase-like (PK-like)"/>
    <property type="match status" value="1"/>
</dbReference>
<dbReference type="PROSITE" id="PS01351">
    <property type="entry name" value="MAPK"/>
    <property type="match status" value="1"/>
</dbReference>
<dbReference type="PROSITE" id="PS50011">
    <property type="entry name" value="PROTEIN_KINASE_DOM"/>
    <property type="match status" value="1"/>
</dbReference>
<dbReference type="PROSITE" id="PS00108">
    <property type="entry name" value="PROTEIN_KINASE_ST"/>
    <property type="match status" value="1"/>
</dbReference>
<sequence>MSLHFLYYCSEPTLDVKIAFCQGFDKHVDVSSIAKHYNMSKSKVDNQFYSVEVGDSTFTVLKRYQNLKPIGSGAQGIVCAAYDAVLDRNVAIKKLSRPFQNQTHAKRAYRELVLMKCVNHKNIISLLNVFTPQKTLEEFQDVYLVMELMDANLCQVIQMELDHERMSYLLYQMLCGIKHLHSAGIIHRDLKPSNIVVKSDCTLKILDFGLARTAGTSFMMTPYVVTRYYRAPEVILGMGYKENVDIWSVGCIMGEMVRHKILFPGRSYIDQWNKVIEQLGTPCPEFMKKLQPTVRNYVENRPKYAGLTFPKLFPDSLFPADSEHNKLKASQARDLLSKMLVIDPVKRISVDDALQHPYINVWYDPAEVEAPPPQIYDKQLDEREHTIEEWKELIYKEVMNSEEKTKNGVVKSQPSPSGAAVNSSESLPPSSAVNDISSMSTDQTLASDTDSSLEASAGPLGCCR</sequence>
<protein>
    <recommendedName>
        <fullName>Mitogen-activated protein kinase 10</fullName>
        <shortName>MAP kinase 10</shortName>
        <shortName>MAPK 10</shortName>
        <ecNumber>2.7.11.24</ecNumber>
    </recommendedName>
    <alternativeName>
        <fullName>MAP kinase p49 3F12</fullName>
    </alternativeName>
    <alternativeName>
        <fullName>Stress-activated protein kinase JNK3</fullName>
    </alternativeName>
    <alternativeName>
        <fullName>c-Jun N-terminal kinase 3</fullName>
    </alternativeName>
</protein>
<accession>Q61831</accession>
<accession>Q9R0U6</accession>
<organism>
    <name type="scientific">Mus musculus</name>
    <name type="common">Mouse</name>
    <dbReference type="NCBI Taxonomy" id="10090"/>
    <lineage>
        <taxon>Eukaryota</taxon>
        <taxon>Metazoa</taxon>
        <taxon>Chordata</taxon>
        <taxon>Craniata</taxon>
        <taxon>Vertebrata</taxon>
        <taxon>Euteleostomi</taxon>
        <taxon>Mammalia</taxon>
        <taxon>Eutheria</taxon>
        <taxon>Euarchontoglires</taxon>
        <taxon>Glires</taxon>
        <taxon>Rodentia</taxon>
        <taxon>Myomorpha</taxon>
        <taxon>Muroidea</taxon>
        <taxon>Muridae</taxon>
        <taxon>Murinae</taxon>
        <taxon>Mus</taxon>
        <taxon>Mus</taxon>
    </lineage>
</organism>
<feature type="chain" id="PRO_0000186278" description="Mitogen-activated protein kinase 10">
    <location>
        <begin position="1"/>
        <end position="464"/>
    </location>
</feature>
<feature type="domain" description="Protein kinase" evidence="4">
    <location>
        <begin position="64"/>
        <end position="359"/>
    </location>
</feature>
<feature type="region of interest" description="Disordered" evidence="6">
    <location>
        <begin position="405"/>
        <end position="464"/>
    </location>
</feature>
<feature type="short sequence motif" description="TXY">
    <location>
        <begin position="221"/>
        <end position="223"/>
    </location>
</feature>
<feature type="compositionally biased region" description="Polar residues" evidence="6">
    <location>
        <begin position="410"/>
        <end position="454"/>
    </location>
</feature>
<feature type="active site" description="Proton acceptor" evidence="4 5">
    <location>
        <position position="189"/>
    </location>
</feature>
<feature type="binding site" evidence="4">
    <location>
        <begin position="70"/>
        <end position="78"/>
    </location>
    <ligand>
        <name>ATP</name>
        <dbReference type="ChEBI" id="CHEBI:30616"/>
    </ligand>
</feature>
<feature type="binding site" evidence="4">
    <location>
        <position position="93"/>
    </location>
    <ligand>
        <name>ATP</name>
        <dbReference type="ChEBI" id="CHEBI:30616"/>
    </ligand>
</feature>
<feature type="modified residue" description="Phosphothreonine; by MAP2K7" evidence="3">
    <location>
        <position position="221"/>
    </location>
</feature>
<feature type="modified residue" description="Phosphotyrosine; by MAP2K4" evidence="3">
    <location>
        <position position="223"/>
    </location>
</feature>
<feature type="lipid moiety-binding region" description="S-palmitoyl cysteine" evidence="1">
    <location>
        <position position="462"/>
    </location>
</feature>
<feature type="lipid moiety-binding region" description="S-palmitoyl cysteine" evidence="1">
    <location>
        <position position="463"/>
    </location>
</feature>
<feature type="splice variant" id="VSP_004840" description="In isoform Alpha-1." evidence="14">
    <original>GAAVNSSESLPPSSAVNDISSMSTDQTLASDTDSSLEASAGPLGCCR</original>
    <variation>AQVQQ</variation>
    <location>
        <begin position="418"/>
        <end position="464"/>
    </location>
</feature>
<feature type="sequence conflict" description="In Ref. 2; BAA85877." evidence="14" ref="2">
    <original>S</original>
    <variation>D</variation>
    <location>
        <position position="267"/>
    </location>
</feature>
<feature type="sequence conflict" description="In Ref. 2; BAA85877." evidence="14" ref="2">
    <original>V</original>
    <variation>A</variation>
    <location>
        <position position="345"/>
    </location>
</feature>
<feature type="sequence conflict" description="In Ref. 2; BAA85877." evidence="14" ref="2">
    <original>S</original>
    <variation>G</variation>
    <location>
        <position position="412"/>
    </location>
</feature>
<feature type="sequence conflict" description="In Ref. 2." evidence="14" ref="2">
    <original>GAAVNS</original>
    <variation>AQVQQ</variation>
    <location>
        <begin position="418"/>
        <end position="423"/>
    </location>
</feature>
<keyword id="KW-0025">Alternative splicing</keyword>
<keyword id="KW-0067">ATP-binding</keyword>
<keyword id="KW-0090">Biological rhythms</keyword>
<keyword id="KW-0963">Cytoplasm</keyword>
<keyword id="KW-0418">Kinase</keyword>
<keyword id="KW-0449">Lipoprotein</keyword>
<keyword id="KW-0472">Membrane</keyword>
<keyword id="KW-0496">Mitochondrion</keyword>
<keyword id="KW-0547">Nucleotide-binding</keyword>
<keyword id="KW-0539">Nucleus</keyword>
<keyword id="KW-0564">Palmitate</keyword>
<keyword id="KW-0597">Phosphoprotein</keyword>
<keyword id="KW-1185">Reference proteome</keyword>
<keyword id="KW-0723">Serine/threonine-protein kinase</keyword>
<keyword id="KW-0808">Transferase</keyword>
<reference key="1">
    <citation type="journal article" date="1996" name="Brain Res. Mol. Brain Res.">
        <title>Developmental expression in the mouse nervous system of the p493F12 SAP kinase.</title>
        <authorList>
            <person name="Martin J.H."/>
            <person name="Mohit A.A."/>
            <person name="Miller C.A."/>
        </authorList>
    </citation>
    <scope>NUCLEOTIDE SEQUENCE [MRNA]</scope>
    <source>
        <strain>BALB/cJ</strain>
        <tissue>Brain</tissue>
    </source>
</reference>
<reference key="2">
    <citation type="journal article" date="1999" name="Mol. Cell. Biol.">
        <title>JSAP1, a novel jun N-terminal protein kinase (JNK)-binding protein that functions as a scaffold factor in the JNK signaling pathway.</title>
        <authorList>
            <person name="Ito M."/>
            <person name="Yoshioka K."/>
            <person name="Akechi M."/>
            <person name="Yamashita S."/>
            <person name="Takamatsu N."/>
            <person name="Sugiyama K."/>
            <person name="Hibi M."/>
            <person name="Nakabeppu Y."/>
            <person name="Shiba T."/>
            <person name="Yamamoto K."/>
        </authorList>
    </citation>
    <scope>NUCLEOTIDE SEQUENCE [MRNA] OF 39-464</scope>
    <source>
        <tissue>Brain</tissue>
    </source>
</reference>
<reference key="3">
    <citation type="unpublished observations" date="1997-03">
        <authorList>
            <person name="Hulo-Demole C."/>
            <person name="Braconi-Quintaje S."/>
        </authorList>
    </citation>
    <scope>IDENTIFICATION OF LONG FORM (ALPHA-2)</scope>
</reference>
<reference key="4">
    <citation type="journal article" date="1997" name="Nature">
        <title>Absence of excitotoxicity-induced apoptosis in the hippocampus of mice lacking the Jnk3 gene.</title>
        <authorList>
            <person name="Yang D.D."/>
            <person name="Kuan C.-Y."/>
            <person name="Whitmarsh A.J."/>
            <person name="Rincon M."/>
            <person name="Zheng T.S."/>
            <person name="Davis R.J."/>
            <person name="Rakic P."/>
            <person name="Flavell R.A."/>
        </authorList>
    </citation>
    <scope>FUNCTION</scope>
    <scope>COFACTOR</scope>
    <source>
        <tissue>Hippocampus</tissue>
    </source>
</reference>
<reference key="5">
    <citation type="journal article" date="1999" name="FEBS Lett.">
        <title>A novel Jun N-terminal kinase (JNK)-binding protein that enhances the activation of JNK by MEK kinase 1 and TGF-beta-activated kinase 1.</title>
        <authorList>
            <person name="Koyano S."/>
            <person name="Ito M."/>
            <person name="Takamatsu N."/>
            <person name="Shiba T."/>
            <person name="Yamamoto K."/>
            <person name="Yoshioka K."/>
        </authorList>
    </citation>
    <scope>INTERACTION WITH MAPKBP1</scope>
</reference>
<reference key="6">
    <citation type="journal article" date="2006" name="Mol. Cell. Biol.">
        <title>Neuroprotection by histone deacetylase-related protein.</title>
        <authorList>
            <person name="Morrison B.E."/>
            <person name="Majdzadeh N."/>
            <person name="Zhang X."/>
            <person name="Lyles A."/>
            <person name="Bassel-Duby R."/>
            <person name="Olson E.N."/>
            <person name="D'Mello S.R."/>
        </authorList>
    </citation>
    <scope>INTERACTION WITH HDAC9</scope>
    <scope>ACTIVITY REGULATION</scope>
</reference>
<reference key="7">
    <citation type="journal article" date="2007" name="J. Exp. Med.">
        <title>MyD88-5 links mitochondria, microtubules, and JNK3 in neurons and regulates neuronal survival.</title>
        <authorList>
            <person name="Kim Y."/>
            <person name="Zhou P."/>
            <person name="Qian L."/>
            <person name="Chuang J.Z."/>
            <person name="Lee J."/>
            <person name="Li C."/>
            <person name="Iadecola C."/>
            <person name="Nathan C."/>
            <person name="Ding A."/>
        </authorList>
    </citation>
    <scope>SUBCELLULAR LOCATION</scope>
    <scope>INTERACTION WITH SARM1</scope>
</reference>
<reference key="8">
    <citation type="journal article" date="2010" name="Cell">
        <title>A tissue-specific atlas of mouse protein phosphorylation and expression.</title>
        <authorList>
            <person name="Huttlin E.L."/>
            <person name="Jedrychowski M.P."/>
            <person name="Elias J.E."/>
            <person name="Goswami T."/>
            <person name="Rad R."/>
            <person name="Beausoleil S.A."/>
            <person name="Villen J."/>
            <person name="Haas W."/>
            <person name="Sowa M.E."/>
            <person name="Gygi S.P."/>
        </authorList>
    </citation>
    <scope>IDENTIFICATION BY MASS SPECTROMETRY [LARGE SCALE ANALYSIS]</scope>
    <source>
        <tissue>Brain</tissue>
    </source>
</reference>
<reference key="9">
    <citation type="journal article" date="2010" name="J. Neuropathol. Exp. Neurol.">
        <title>JNK3 mediates paraquat- and rotenone-induced dopaminergic neuron death.</title>
        <authorList>
            <person name="Choi W.S."/>
            <person name="Abel G."/>
            <person name="Klintworth H."/>
            <person name="Flavell R.A."/>
            <person name="Xia Z."/>
        </authorList>
    </citation>
    <scope>FUNCTION IN NEURONAL APOPTOSIS</scope>
</reference>
<reference key="10">
    <citation type="journal article" date="2011" name="Hear. Res.">
        <title>Activity of all JNK isoforms contributes to neurite growth in spiral ganglion neurons.</title>
        <authorList>
            <person name="Atkinson P.J."/>
            <person name="Cho C.H."/>
            <person name="Hansen M.R."/>
            <person name="Green S.H."/>
        </authorList>
    </citation>
    <scope>FUNCTION IN NEURITE GROWTH</scope>
</reference>
<reference key="11">
    <citation type="journal article" date="2012" name="EMBO Rep.">
        <title>JNK regulates the photic response of the mammalian circadian clock.</title>
        <authorList>
            <person name="Yoshitane H."/>
            <person name="Honma S."/>
            <person name="Imamura K."/>
            <person name="Nakajima H."/>
            <person name="Nishide S.Y."/>
            <person name="Ono D."/>
            <person name="Kiyota H."/>
            <person name="Shinozaki N."/>
            <person name="Matsuki H."/>
            <person name="Wada N."/>
            <person name="Doi H."/>
            <person name="Hamada T."/>
            <person name="Honma K."/>
            <person name="Fukada Y."/>
        </authorList>
    </citation>
    <scope>FUNCTION</scope>
    <scope>TISSUE SPECIFICITY</scope>
</reference>
<evidence type="ECO:0000250" key="1"/>
<evidence type="ECO:0000250" key="2">
    <source>
        <dbReference type="UniProtKB" id="P49187"/>
    </source>
</evidence>
<evidence type="ECO:0000250" key="3">
    <source>
        <dbReference type="UniProtKB" id="P53779"/>
    </source>
</evidence>
<evidence type="ECO:0000255" key="4">
    <source>
        <dbReference type="PROSITE-ProRule" id="PRU00159"/>
    </source>
</evidence>
<evidence type="ECO:0000255" key="5">
    <source>
        <dbReference type="PROSITE-ProRule" id="PRU10027"/>
    </source>
</evidence>
<evidence type="ECO:0000256" key="6">
    <source>
        <dbReference type="SAM" id="MobiDB-lite"/>
    </source>
</evidence>
<evidence type="ECO:0000269" key="7">
    <source>
    </source>
</evidence>
<evidence type="ECO:0000269" key="8">
    <source>
    </source>
</evidence>
<evidence type="ECO:0000269" key="9">
    <source>
    </source>
</evidence>
<evidence type="ECO:0000269" key="10">
    <source>
    </source>
</evidence>
<evidence type="ECO:0000269" key="11">
    <source>
    </source>
</evidence>
<evidence type="ECO:0000269" key="12">
    <source>
    </source>
</evidence>
<evidence type="ECO:0000269" key="13">
    <source>
    </source>
</evidence>
<evidence type="ECO:0000305" key="14"/>
<name>MK10_MOUSE</name>
<proteinExistence type="evidence at protein level"/>